<comment type="function">
    <text evidence="1">Catalyzes the phosphorylation of pantothenate (Pan), the first step in CoA biosynthesis.</text>
</comment>
<comment type="catalytic activity">
    <reaction evidence="1">
        <text>(R)-pantothenate + ATP = (R)-4'-phosphopantothenate + ADP + H(+)</text>
        <dbReference type="Rhea" id="RHEA:16373"/>
        <dbReference type="ChEBI" id="CHEBI:10986"/>
        <dbReference type="ChEBI" id="CHEBI:15378"/>
        <dbReference type="ChEBI" id="CHEBI:29032"/>
        <dbReference type="ChEBI" id="CHEBI:30616"/>
        <dbReference type="ChEBI" id="CHEBI:456216"/>
        <dbReference type="EC" id="2.7.1.33"/>
    </reaction>
</comment>
<comment type="cofactor">
    <cofactor evidence="1">
        <name>NH4(+)</name>
        <dbReference type="ChEBI" id="CHEBI:28938"/>
    </cofactor>
    <cofactor evidence="1">
        <name>K(+)</name>
        <dbReference type="ChEBI" id="CHEBI:29103"/>
    </cofactor>
    <text evidence="1">A monovalent cation. Ammonium or potassium.</text>
</comment>
<comment type="pathway">
    <text evidence="1">Cofactor biosynthesis; coenzyme A biosynthesis; CoA from (R)-pantothenate: step 1/5.</text>
</comment>
<comment type="subunit">
    <text evidence="1">Homodimer.</text>
</comment>
<comment type="subcellular location">
    <subcellularLocation>
        <location evidence="1">Cytoplasm</location>
    </subcellularLocation>
</comment>
<comment type="similarity">
    <text evidence="1">Belongs to the type III pantothenate kinase family.</text>
</comment>
<accession>Q5WLV5</accession>
<proteinExistence type="inferred from homology"/>
<evidence type="ECO:0000255" key="1">
    <source>
        <dbReference type="HAMAP-Rule" id="MF_01274"/>
    </source>
</evidence>
<keyword id="KW-0067">ATP-binding</keyword>
<keyword id="KW-0173">Coenzyme A biosynthesis</keyword>
<keyword id="KW-0963">Cytoplasm</keyword>
<keyword id="KW-0418">Kinase</keyword>
<keyword id="KW-0479">Metal-binding</keyword>
<keyword id="KW-0547">Nucleotide-binding</keyword>
<keyword id="KW-0630">Potassium</keyword>
<keyword id="KW-1185">Reference proteome</keyword>
<keyword id="KW-0808">Transferase</keyword>
<name>COAX_SHOC1</name>
<dbReference type="EC" id="2.7.1.33" evidence="1"/>
<dbReference type="EMBL" id="AP006627">
    <property type="protein sequence ID" value="BAD62650.1"/>
    <property type="molecule type" value="Genomic_DNA"/>
</dbReference>
<dbReference type="RefSeq" id="WP_011244971.1">
    <property type="nucleotide sequence ID" value="NC_006582.1"/>
</dbReference>
<dbReference type="SMR" id="Q5WLV5"/>
<dbReference type="STRING" id="66692.ABC0107"/>
<dbReference type="KEGG" id="bcl:ABC0107"/>
<dbReference type="eggNOG" id="COG1521">
    <property type="taxonomic scope" value="Bacteria"/>
</dbReference>
<dbReference type="HOGENOM" id="CLU_066627_1_0_9"/>
<dbReference type="OrthoDB" id="9804707at2"/>
<dbReference type="UniPathway" id="UPA00241">
    <property type="reaction ID" value="UER00352"/>
</dbReference>
<dbReference type="Proteomes" id="UP000001168">
    <property type="component" value="Chromosome"/>
</dbReference>
<dbReference type="GO" id="GO:0005737">
    <property type="term" value="C:cytoplasm"/>
    <property type="evidence" value="ECO:0007669"/>
    <property type="project" value="UniProtKB-SubCell"/>
</dbReference>
<dbReference type="GO" id="GO:0005524">
    <property type="term" value="F:ATP binding"/>
    <property type="evidence" value="ECO:0007669"/>
    <property type="project" value="UniProtKB-UniRule"/>
</dbReference>
<dbReference type="GO" id="GO:0046872">
    <property type="term" value="F:metal ion binding"/>
    <property type="evidence" value="ECO:0007669"/>
    <property type="project" value="UniProtKB-KW"/>
</dbReference>
<dbReference type="GO" id="GO:0004594">
    <property type="term" value="F:pantothenate kinase activity"/>
    <property type="evidence" value="ECO:0007669"/>
    <property type="project" value="UniProtKB-UniRule"/>
</dbReference>
<dbReference type="GO" id="GO:0015937">
    <property type="term" value="P:coenzyme A biosynthetic process"/>
    <property type="evidence" value="ECO:0007669"/>
    <property type="project" value="UniProtKB-UniRule"/>
</dbReference>
<dbReference type="CDD" id="cd24015">
    <property type="entry name" value="ASKHA_NBD_PanK-III"/>
    <property type="match status" value="1"/>
</dbReference>
<dbReference type="Gene3D" id="3.30.420.40">
    <property type="match status" value="2"/>
</dbReference>
<dbReference type="HAMAP" id="MF_01274">
    <property type="entry name" value="Pantothen_kinase_3"/>
    <property type="match status" value="1"/>
</dbReference>
<dbReference type="InterPro" id="IPR043129">
    <property type="entry name" value="ATPase_NBD"/>
</dbReference>
<dbReference type="InterPro" id="IPR004619">
    <property type="entry name" value="Type_III_PanK"/>
</dbReference>
<dbReference type="NCBIfam" id="TIGR00671">
    <property type="entry name" value="baf"/>
    <property type="match status" value="1"/>
</dbReference>
<dbReference type="NCBIfam" id="NF009848">
    <property type="entry name" value="PRK13318.1-6"/>
    <property type="match status" value="1"/>
</dbReference>
<dbReference type="NCBIfam" id="NF009855">
    <property type="entry name" value="PRK13321.1"/>
    <property type="match status" value="1"/>
</dbReference>
<dbReference type="PANTHER" id="PTHR34265">
    <property type="entry name" value="TYPE III PANTOTHENATE KINASE"/>
    <property type="match status" value="1"/>
</dbReference>
<dbReference type="PANTHER" id="PTHR34265:SF1">
    <property type="entry name" value="TYPE III PANTOTHENATE KINASE"/>
    <property type="match status" value="1"/>
</dbReference>
<dbReference type="Pfam" id="PF03309">
    <property type="entry name" value="Pan_kinase"/>
    <property type="match status" value="1"/>
</dbReference>
<dbReference type="SUPFAM" id="SSF53067">
    <property type="entry name" value="Actin-like ATPase domain"/>
    <property type="match status" value="2"/>
</dbReference>
<feature type="chain" id="PRO_0000267495" description="Type III pantothenate kinase">
    <location>
        <begin position="1"/>
        <end position="256"/>
    </location>
</feature>
<feature type="active site" description="Proton acceptor" evidence="1">
    <location>
        <position position="110"/>
    </location>
</feature>
<feature type="binding site" evidence="1">
    <location>
        <begin position="6"/>
        <end position="13"/>
    </location>
    <ligand>
        <name>ATP</name>
        <dbReference type="ChEBI" id="CHEBI:30616"/>
    </ligand>
</feature>
<feature type="binding site" evidence="1">
    <location>
        <position position="101"/>
    </location>
    <ligand>
        <name>substrate</name>
    </ligand>
</feature>
<feature type="binding site" evidence="1">
    <location>
        <begin position="108"/>
        <end position="111"/>
    </location>
    <ligand>
        <name>substrate</name>
    </ligand>
</feature>
<feature type="binding site" evidence="1">
    <location>
        <position position="130"/>
    </location>
    <ligand>
        <name>K(+)</name>
        <dbReference type="ChEBI" id="CHEBI:29103"/>
    </ligand>
</feature>
<feature type="binding site" evidence="1">
    <location>
        <position position="133"/>
    </location>
    <ligand>
        <name>ATP</name>
        <dbReference type="ChEBI" id="CHEBI:30616"/>
    </ligand>
</feature>
<feature type="binding site" evidence="1">
    <location>
        <position position="185"/>
    </location>
    <ligand>
        <name>substrate</name>
    </ligand>
</feature>
<reference key="1">
    <citation type="submission" date="2003-10" db="EMBL/GenBank/DDBJ databases">
        <title>The complete genome sequence of the alkaliphilic Bacillus clausii KSM-K16.</title>
        <authorList>
            <person name="Takaki Y."/>
            <person name="Kageyama Y."/>
            <person name="Shimamura S."/>
            <person name="Suzuki H."/>
            <person name="Nishi S."/>
            <person name="Hatada Y."/>
            <person name="Kawai S."/>
            <person name="Ito S."/>
            <person name="Horikoshi K."/>
        </authorList>
    </citation>
    <scope>NUCLEOTIDE SEQUENCE [LARGE SCALE GENOMIC DNA]</scope>
    <source>
        <strain>KSM-K16</strain>
    </source>
</reference>
<gene>
    <name evidence="1" type="primary">coaX</name>
    <name type="ordered locus">ABC0107</name>
</gene>
<protein>
    <recommendedName>
        <fullName evidence="1">Type III pantothenate kinase</fullName>
        <ecNumber evidence="1">2.7.1.33</ecNumber>
    </recommendedName>
    <alternativeName>
        <fullName evidence="1">PanK-III</fullName>
    </alternativeName>
    <alternativeName>
        <fullName evidence="1">Pantothenic acid kinase</fullName>
    </alternativeName>
</protein>
<sequence length="256" mass="27945">MMLAIDIGNSSIVTGVYDENDQLAFIFRIATTHDKTSDEYAMLLHSFFEQKGCRFNDVTGVIIASVVPTIMHRFRRMCQDYLHVTPLIVGPGIRTGLSIHYQDPKEVGADRIANAVAAIARYGAPCIVVDIGTATTFCCIDAKHRYRGGVIAPGAAISTAALSNKASKLPKIELTKPASVVGKTTVASMESGTFYGHIAMIDGVVERIKEEQRLDDAKVIATGGLAYLYAEESKQIQHLEQELTLSGLKYIYDKNQ</sequence>
<organism>
    <name type="scientific">Shouchella clausii (strain KSM-K16)</name>
    <name type="common">Alkalihalobacillus clausii</name>
    <dbReference type="NCBI Taxonomy" id="66692"/>
    <lineage>
        <taxon>Bacteria</taxon>
        <taxon>Bacillati</taxon>
        <taxon>Bacillota</taxon>
        <taxon>Bacilli</taxon>
        <taxon>Bacillales</taxon>
        <taxon>Bacillaceae</taxon>
        <taxon>Shouchella</taxon>
    </lineage>
</organism>